<accession>Q5EA33</accession>
<sequence length="238" mass="27196">MEKEKVNDEKPDPENSLDFSEHFNQLELLETHGHLIPTGTQSLWIGNSDDDEEQDEKTEEWYQLQEKKMEKDPSKLLLWAAEKNRLTTVQRLLSERATHVNTRDEDKYTPLHRAAYNGHLDVVRELIAHGADVHAVTVDGWTPLHSACKWNNARVASFLLQHDADVNAQTKGLLTPLHLAAGNRDSKDTLELLLMNRYIKPGLKNSLEETAFDIARRTGIYHYLFEIVEGCTNCSPQS</sequence>
<keyword id="KW-0040">ANK repeat</keyword>
<keyword id="KW-0221">Differentiation</keyword>
<keyword id="KW-0539">Nucleus</keyword>
<keyword id="KW-0597">Phosphoprotein</keyword>
<keyword id="KW-1185">Reference proteome</keyword>
<keyword id="KW-0677">Repeat</keyword>
<keyword id="KW-0744">Spermatogenesis</keyword>
<protein>
    <recommendedName>
        <fullName>Ankyrin repeat domain-containing protein 49</fullName>
    </recommendedName>
</protein>
<comment type="function">
    <text evidence="1">May have a role in spermatogenesis where it promotes autophagy in response to serum starvation, via the NF-kappaB pathway.</text>
</comment>
<comment type="subcellular location">
    <subcellularLocation>
        <location evidence="1">Nucleus</location>
    </subcellularLocation>
</comment>
<reference key="1">
    <citation type="journal article" date="2005" name="BMC Genomics">
        <title>Characterization of 954 bovine full-CDS cDNA sequences.</title>
        <authorList>
            <person name="Harhay G.P."/>
            <person name="Sonstegard T.S."/>
            <person name="Keele J.W."/>
            <person name="Heaton M.P."/>
            <person name="Clawson M.L."/>
            <person name="Snelling W.M."/>
            <person name="Wiedmann R.T."/>
            <person name="Van Tassell C.P."/>
            <person name="Smith T.P.L."/>
        </authorList>
    </citation>
    <scope>NUCLEOTIDE SEQUENCE [LARGE SCALE MRNA]</scope>
</reference>
<reference key="2">
    <citation type="submission" date="2005-09" db="EMBL/GenBank/DDBJ databases">
        <authorList>
            <consortium name="NIH - Mammalian Gene Collection (MGC) project"/>
        </authorList>
    </citation>
    <scope>NUCLEOTIDE SEQUENCE [LARGE SCALE MRNA]</scope>
    <source>
        <strain>Hereford</strain>
        <tissue>Colon</tissue>
    </source>
</reference>
<dbReference type="EMBL" id="BT020736">
    <property type="protein sequence ID" value="AAX08753.1"/>
    <property type="molecule type" value="mRNA"/>
</dbReference>
<dbReference type="EMBL" id="BC104574">
    <property type="protein sequence ID" value="AAI04575.1"/>
    <property type="molecule type" value="mRNA"/>
</dbReference>
<dbReference type="RefSeq" id="NP_001014965.1">
    <property type="nucleotide sequence ID" value="NM_001014965.2"/>
</dbReference>
<dbReference type="RefSeq" id="XP_005215790.1">
    <property type="nucleotide sequence ID" value="XM_005215733.5"/>
</dbReference>
<dbReference type="RefSeq" id="XP_059730931.1">
    <property type="nucleotide sequence ID" value="XM_059874948.1"/>
</dbReference>
<dbReference type="SMR" id="Q5EA33"/>
<dbReference type="FunCoup" id="Q5EA33">
    <property type="interactions" value="2777"/>
</dbReference>
<dbReference type="STRING" id="9913.ENSBTAP00000045318"/>
<dbReference type="PaxDb" id="9913-ENSBTAP00000045318"/>
<dbReference type="Ensembl" id="ENSBTAT00000048242.3">
    <property type="protein sequence ID" value="ENSBTAP00000045318.1"/>
    <property type="gene ID" value="ENSBTAG00000009176.6"/>
</dbReference>
<dbReference type="GeneID" id="540949"/>
<dbReference type="KEGG" id="bta:540949"/>
<dbReference type="CTD" id="54851"/>
<dbReference type="VEuPathDB" id="HostDB:ENSBTAG00000009176"/>
<dbReference type="VGNC" id="VGNC:25933">
    <property type="gene designation" value="ANKRD49"/>
</dbReference>
<dbReference type="eggNOG" id="KOG0512">
    <property type="taxonomic scope" value="Eukaryota"/>
</dbReference>
<dbReference type="GeneTree" id="ENSGT00390000003919"/>
<dbReference type="HOGENOM" id="CLU_000134_19_1_1"/>
<dbReference type="InParanoid" id="Q5EA33"/>
<dbReference type="OMA" id="NRYVKPD"/>
<dbReference type="OrthoDB" id="19174at2759"/>
<dbReference type="TreeFam" id="TF351259"/>
<dbReference type="Proteomes" id="UP000009136">
    <property type="component" value="Chromosome 15"/>
</dbReference>
<dbReference type="Bgee" id="ENSBTAG00000009176">
    <property type="expression patterns" value="Expressed in oocyte and 105 other cell types or tissues"/>
</dbReference>
<dbReference type="GO" id="GO:0005634">
    <property type="term" value="C:nucleus"/>
    <property type="evidence" value="ECO:0007669"/>
    <property type="project" value="UniProtKB-SubCell"/>
</dbReference>
<dbReference type="GO" id="GO:0030154">
    <property type="term" value="P:cell differentiation"/>
    <property type="evidence" value="ECO:0007669"/>
    <property type="project" value="UniProtKB-KW"/>
</dbReference>
<dbReference type="GO" id="GO:0045893">
    <property type="term" value="P:positive regulation of DNA-templated transcription"/>
    <property type="evidence" value="ECO:0000318"/>
    <property type="project" value="GO_Central"/>
</dbReference>
<dbReference type="GO" id="GO:0007283">
    <property type="term" value="P:spermatogenesis"/>
    <property type="evidence" value="ECO:0007669"/>
    <property type="project" value="UniProtKB-KW"/>
</dbReference>
<dbReference type="FunFam" id="1.25.40.20:FF:000215">
    <property type="entry name" value="ankyrin repeat domain-containing protein 49"/>
    <property type="match status" value="1"/>
</dbReference>
<dbReference type="Gene3D" id="1.25.40.20">
    <property type="entry name" value="Ankyrin repeat-containing domain"/>
    <property type="match status" value="1"/>
</dbReference>
<dbReference type="InterPro" id="IPR002110">
    <property type="entry name" value="Ankyrin_rpt"/>
</dbReference>
<dbReference type="InterPro" id="IPR036770">
    <property type="entry name" value="Ankyrin_rpt-contain_sf"/>
</dbReference>
<dbReference type="InterPro" id="IPR050745">
    <property type="entry name" value="Multifunctional_regulatory"/>
</dbReference>
<dbReference type="PANTHER" id="PTHR24189:SF73">
    <property type="entry name" value="ANKYRIN REPEAT AND SOCS BOX-CONTAINING 15B"/>
    <property type="match status" value="1"/>
</dbReference>
<dbReference type="PANTHER" id="PTHR24189">
    <property type="entry name" value="MYOTROPHIN"/>
    <property type="match status" value="1"/>
</dbReference>
<dbReference type="Pfam" id="PF00023">
    <property type="entry name" value="Ank"/>
    <property type="match status" value="1"/>
</dbReference>
<dbReference type="Pfam" id="PF12796">
    <property type="entry name" value="Ank_2"/>
    <property type="match status" value="1"/>
</dbReference>
<dbReference type="PRINTS" id="PR01415">
    <property type="entry name" value="ANKYRIN"/>
</dbReference>
<dbReference type="SMART" id="SM00248">
    <property type="entry name" value="ANK"/>
    <property type="match status" value="3"/>
</dbReference>
<dbReference type="SUPFAM" id="SSF48403">
    <property type="entry name" value="Ankyrin repeat"/>
    <property type="match status" value="1"/>
</dbReference>
<dbReference type="PROSITE" id="PS50297">
    <property type="entry name" value="ANK_REP_REGION"/>
    <property type="match status" value="1"/>
</dbReference>
<dbReference type="PROSITE" id="PS50088">
    <property type="entry name" value="ANK_REPEAT"/>
    <property type="match status" value="2"/>
</dbReference>
<proteinExistence type="evidence at transcript level"/>
<feature type="chain" id="PRO_0000244584" description="Ankyrin repeat domain-containing protein 49">
    <location>
        <begin position="1"/>
        <end position="238"/>
    </location>
</feature>
<feature type="repeat" description="ANK 1">
    <location>
        <begin position="77"/>
        <end position="105"/>
    </location>
</feature>
<feature type="repeat" description="ANK 2">
    <location>
        <begin position="106"/>
        <end position="135"/>
    </location>
</feature>
<feature type="repeat" description="ANK 3">
    <location>
        <begin position="139"/>
        <end position="168"/>
    </location>
</feature>
<feature type="repeat" description="ANK 4">
    <location>
        <begin position="172"/>
        <end position="205"/>
    </location>
</feature>
<feature type="modified residue" description="Phosphoserine" evidence="2">
    <location>
        <position position="48"/>
    </location>
</feature>
<name>ANR49_BOVIN</name>
<organism>
    <name type="scientific">Bos taurus</name>
    <name type="common">Bovine</name>
    <dbReference type="NCBI Taxonomy" id="9913"/>
    <lineage>
        <taxon>Eukaryota</taxon>
        <taxon>Metazoa</taxon>
        <taxon>Chordata</taxon>
        <taxon>Craniata</taxon>
        <taxon>Vertebrata</taxon>
        <taxon>Euteleostomi</taxon>
        <taxon>Mammalia</taxon>
        <taxon>Eutheria</taxon>
        <taxon>Laurasiatheria</taxon>
        <taxon>Artiodactyla</taxon>
        <taxon>Ruminantia</taxon>
        <taxon>Pecora</taxon>
        <taxon>Bovidae</taxon>
        <taxon>Bovinae</taxon>
        <taxon>Bos</taxon>
    </lineage>
</organism>
<gene>
    <name type="primary">ANKRD49</name>
</gene>
<evidence type="ECO:0000250" key="1">
    <source>
        <dbReference type="UniProtKB" id="Q8VE42"/>
    </source>
</evidence>
<evidence type="ECO:0000250" key="2">
    <source>
        <dbReference type="UniProtKB" id="Q8WVL7"/>
    </source>
</evidence>